<evidence type="ECO:0000255" key="1">
    <source>
        <dbReference type="HAMAP-Rule" id="MF_00558"/>
    </source>
</evidence>
<name>SUCC_PSESM</name>
<comment type="function">
    <text evidence="1">Succinyl-CoA synthetase functions in the citric acid cycle (TCA), coupling the hydrolysis of succinyl-CoA to the synthesis of either ATP or GTP and thus represents the only step of substrate-level phosphorylation in the TCA. The beta subunit provides nucleotide specificity of the enzyme and binds the substrate succinate, while the binding sites for coenzyme A and phosphate are found in the alpha subunit.</text>
</comment>
<comment type="catalytic activity">
    <reaction evidence="1">
        <text>succinate + ATP + CoA = succinyl-CoA + ADP + phosphate</text>
        <dbReference type="Rhea" id="RHEA:17661"/>
        <dbReference type="ChEBI" id="CHEBI:30031"/>
        <dbReference type="ChEBI" id="CHEBI:30616"/>
        <dbReference type="ChEBI" id="CHEBI:43474"/>
        <dbReference type="ChEBI" id="CHEBI:57287"/>
        <dbReference type="ChEBI" id="CHEBI:57292"/>
        <dbReference type="ChEBI" id="CHEBI:456216"/>
        <dbReference type="EC" id="6.2.1.5"/>
    </reaction>
    <physiologicalReaction direction="right-to-left" evidence="1">
        <dbReference type="Rhea" id="RHEA:17663"/>
    </physiologicalReaction>
</comment>
<comment type="catalytic activity">
    <reaction evidence="1">
        <text>GTP + succinate + CoA = succinyl-CoA + GDP + phosphate</text>
        <dbReference type="Rhea" id="RHEA:22120"/>
        <dbReference type="ChEBI" id="CHEBI:30031"/>
        <dbReference type="ChEBI" id="CHEBI:37565"/>
        <dbReference type="ChEBI" id="CHEBI:43474"/>
        <dbReference type="ChEBI" id="CHEBI:57287"/>
        <dbReference type="ChEBI" id="CHEBI:57292"/>
        <dbReference type="ChEBI" id="CHEBI:58189"/>
    </reaction>
    <physiologicalReaction direction="right-to-left" evidence="1">
        <dbReference type="Rhea" id="RHEA:22122"/>
    </physiologicalReaction>
</comment>
<comment type="cofactor">
    <cofactor evidence="1">
        <name>Mg(2+)</name>
        <dbReference type="ChEBI" id="CHEBI:18420"/>
    </cofactor>
    <text evidence="1">Binds 1 Mg(2+) ion per subunit.</text>
</comment>
<comment type="pathway">
    <text evidence="1">Carbohydrate metabolism; tricarboxylic acid cycle; succinate from succinyl-CoA (ligase route): step 1/1.</text>
</comment>
<comment type="subunit">
    <text evidence="1">Heterotetramer of two alpha and two beta subunits.</text>
</comment>
<comment type="similarity">
    <text evidence="1">Belongs to the succinate/malate CoA ligase beta subunit family.</text>
</comment>
<organism>
    <name type="scientific">Pseudomonas syringae pv. tomato (strain ATCC BAA-871 / DC3000)</name>
    <dbReference type="NCBI Taxonomy" id="223283"/>
    <lineage>
        <taxon>Bacteria</taxon>
        <taxon>Pseudomonadati</taxon>
        <taxon>Pseudomonadota</taxon>
        <taxon>Gammaproteobacteria</taxon>
        <taxon>Pseudomonadales</taxon>
        <taxon>Pseudomonadaceae</taxon>
        <taxon>Pseudomonas</taxon>
    </lineage>
</organism>
<gene>
    <name evidence="1" type="primary">sucC</name>
    <name type="ordered locus">PSPTO_2202</name>
    <name type="ORF">PSPTO2202</name>
</gene>
<protein>
    <recommendedName>
        <fullName evidence="1">Succinate--CoA ligase [ADP-forming] subunit beta</fullName>
        <ecNumber evidence="1">6.2.1.5</ecNumber>
    </recommendedName>
    <alternativeName>
        <fullName evidence="1">Succinyl-CoA synthetase subunit beta</fullName>
        <shortName evidence="1">SCS-beta</shortName>
    </alternativeName>
</protein>
<reference key="1">
    <citation type="journal article" date="2003" name="Proc. Natl. Acad. Sci. U.S.A.">
        <title>The complete genome sequence of the Arabidopsis and tomato pathogen Pseudomonas syringae pv. tomato DC3000.</title>
        <authorList>
            <person name="Buell C.R."/>
            <person name="Joardar V."/>
            <person name="Lindeberg M."/>
            <person name="Selengut J."/>
            <person name="Paulsen I.T."/>
            <person name="Gwinn M.L."/>
            <person name="Dodson R.J."/>
            <person name="DeBoy R.T."/>
            <person name="Durkin A.S."/>
            <person name="Kolonay J.F."/>
            <person name="Madupu R."/>
            <person name="Daugherty S.C."/>
            <person name="Brinkac L.M."/>
            <person name="Beanan M.J."/>
            <person name="Haft D.H."/>
            <person name="Nelson W.C."/>
            <person name="Davidsen T.M."/>
            <person name="Zafar N."/>
            <person name="Zhou L."/>
            <person name="Liu J."/>
            <person name="Yuan Q."/>
            <person name="Khouri H.M."/>
            <person name="Fedorova N.B."/>
            <person name="Tran B."/>
            <person name="Russell D."/>
            <person name="Berry K.J."/>
            <person name="Utterback T.R."/>
            <person name="Van Aken S.E."/>
            <person name="Feldblyum T.V."/>
            <person name="D'Ascenzo M."/>
            <person name="Deng W.-L."/>
            <person name="Ramos A.R."/>
            <person name="Alfano J.R."/>
            <person name="Cartinhour S."/>
            <person name="Chatterjee A.K."/>
            <person name="Delaney T.P."/>
            <person name="Lazarowitz S.G."/>
            <person name="Martin G.B."/>
            <person name="Schneider D.J."/>
            <person name="Tang X."/>
            <person name="Bender C.L."/>
            <person name="White O."/>
            <person name="Fraser C.M."/>
            <person name="Collmer A."/>
        </authorList>
    </citation>
    <scope>NUCLEOTIDE SEQUENCE [LARGE SCALE GENOMIC DNA]</scope>
    <source>
        <strain>ATCC BAA-871 / DC3000</strain>
    </source>
</reference>
<proteinExistence type="inferred from homology"/>
<dbReference type="EC" id="6.2.1.5" evidence="1"/>
<dbReference type="EMBL" id="AE016853">
    <property type="protein sequence ID" value="AAO55718.1"/>
    <property type="molecule type" value="Genomic_DNA"/>
</dbReference>
<dbReference type="RefSeq" id="NP_792023.1">
    <property type="nucleotide sequence ID" value="NC_004578.1"/>
</dbReference>
<dbReference type="RefSeq" id="WP_002552981.1">
    <property type="nucleotide sequence ID" value="NC_004578.1"/>
</dbReference>
<dbReference type="SMR" id="Q883Z4"/>
<dbReference type="STRING" id="223283.PSPTO_2202"/>
<dbReference type="GeneID" id="96218460"/>
<dbReference type="KEGG" id="pst:PSPTO_2202"/>
<dbReference type="PATRIC" id="fig|223283.9.peg.2234"/>
<dbReference type="eggNOG" id="COG0045">
    <property type="taxonomic scope" value="Bacteria"/>
</dbReference>
<dbReference type="HOGENOM" id="CLU_037430_0_2_6"/>
<dbReference type="OrthoDB" id="9802602at2"/>
<dbReference type="PhylomeDB" id="Q883Z4"/>
<dbReference type="UniPathway" id="UPA00223">
    <property type="reaction ID" value="UER00999"/>
</dbReference>
<dbReference type="Proteomes" id="UP000002515">
    <property type="component" value="Chromosome"/>
</dbReference>
<dbReference type="GO" id="GO:0005829">
    <property type="term" value="C:cytosol"/>
    <property type="evidence" value="ECO:0007669"/>
    <property type="project" value="TreeGrafter"/>
</dbReference>
<dbReference type="GO" id="GO:0042709">
    <property type="term" value="C:succinate-CoA ligase complex"/>
    <property type="evidence" value="ECO:0007669"/>
    <property type="project" value="TreeGrafter"/>
</dbReference>
<dbReference type="GO" id="GO:0005524">
    <property type="term" value="F:ATP binding"/>
    <property type="evidence" value="ECO:0007669"/>
    <property type="project" value="UniProtKB-UniRule"/>
</dbReference>
<dbReference type="GO" id="GO:0000287">
    <property type="term" value="F:magnesium ion binding"/>
    <property type="evidence" value="ECO:0007669"/>
    <property type="project" value="UniProtKB-UniRule"/>
</dbReference>
<dbReference type="GO" id="GO:0004775">
    <property type="term" value="F:succinate-CoA ligase (ADP-forming) activity"/>
    <property type="evidence" value="ECO:0007669"/>
    <property type="project" value="UniProtKB-UniRule"/>
</dbReference>
<dbReference type="GO" id="GO:0004776">
    <property type="term" value="F:succinate-CoA ligase (GDP-forming) activity"/>
    <property type="evidence" value="ECO:0007669"/>
    <property type="project" value="RHEA"/>
</dbReference>
<dbReference type="GO" id="GO:0006104">
    <property type="term" value="P:succinyl-CoA metabolic process"/>
    <property type="evidence" value="ECO:0007669"/>
    <property type="project" value="TreeGrafter"/>
</dbReference>
<dbReference type="GO" id="GO:0006099">
    <property type="term" value="P:tricarboxylic acid cycle"/>
    <property type="evidence" value="ECO:0007669"/>
    <property type="project" value="UniProtKB-UniRule"/>
</dbReference>
<dbReference type="FunFam" id="3.30.1490.20:FF:000002">
    <property type="entry name" value="Succinate--CoA ligase [ADP-forming] subunit beta"/>
    <property type="match status" value="1"/>
</dbReference>
<dbReference type="FunFam" id="3.30.470.20:FF:000002">
    <property type="entry name" value="Succinate--CoA ligase [ADP-forming] subunit beta"/>
    <property type="match status" value="1"/>
</dbReference>
<dbReference type="FunFam" id="3.40.50.261:FF:000001">
    <property type="entry name" value="Succinate--CoA ligase [ADP-forming] subunit beta"/>
    <property type="match status" value="1"/>
</dbReference>
<dbReference type="Gene3D" id="3.30.1490.20">
    <property type="entry name" value="ATP-grasp fold, A domain"/>
    <property type="match status" value="1"/>
</dbReference>
<dbReference type="Gene3D" id="3.30.470.20">
    <property type="entry name" value="ATP-grasp fold, B domain"/>
    <property type="match status" value="1"/>
</dbReference>
<dbReference type="Gene3D" id="3.40.50.261">
    <property type="entry name" value="Succinyl-CoA synthetase domains"/>
    <property type="match status" value="1"/>
</dbReference>
<dbReference type="HAMAP" id="MF_00558">
    <property type="entry name" value="Succ_CoA_beta"/>
    <property type="match status" value="1"/>
</dbReference>
<dbReference type="InterPro" id="IPR011761">
    <property type="entry name" value="ATP-grasp"/>
</dbReference>
<dbReference type="InterPro" id="IPR013650">
    <property type="entry name" value="ATP-grasp_succ-CoA_synth-type"/>
</dbReference>
<dbReference type="InterPro" id="IPR013815">
    <property type="entry name" value="ATP_grasp_subdomain_1"/>
</dbReference>
<dbReference type="InterPro" id="IPR017866">
    <property type="entry name" value="Succ-CoA_synthase_bsu_CS"/>
</dbReference>
<dbReference type="InterPro" id="IPR005811">
    <property type="entry name" value="SUCC_ACL_C"/>
</dbReference>
<dbReference type="InterPro" id="IPR005809">
    <property type="entry name" value="Succ_CoA_ligase-like_bsu"/>
</dbReference>
<dbReference type="InterPro" id="IPR016102">
    <property type="entry name" value="Succinyl-CoA_synth-like"/>
</dbReference>
<dbReference type="NCBIfam" id="NF001913">
    <property type="entry name" value="PRK00696.1"/>
    <property type="match status" value="1"/>
</dbReference>
<dbReference type="NCBIfam" id="TIGR01016">
    <property type="entry name" value="sucCoAbeta"/>
    <property type="match status" value="1"/>
</dbReference>
<dbReference type="PANTHER" id="PTHR11815:SF10">
    <property type="entry name" value="SUCCINATE--COA LIGASE [GDP-FORMING] SUBUNIT BETA, MITOCHONDRIAL"/>
    <property type="match status" value="1"/>
</dbReference>
<dbReference type="PANTHER" id="PTHR11815">
    <property type="entry name" value="SUCCINYL-COA SYNTHETASE BETA CHAIN"/>
    <property type="match status" value="1"/>
</dbReference>
<dbReference type="Pfam" id="PF08442">
    <property type="entry name" value="ATP-grasp_2"/>
    <property type="match status" value="1"/>
</dbReference>
<dbReference type="Pfam" id="PF00549">
    <property type="entry name" value="Ligase_CoA"/>
    <property type="match status" value="1"/>
</dbReference>
<dbReference type="PIRSF" id="PIRSF001554">
    <property type="entry name" value="SucCS_beta"/>
    <property type="match status" value="1"/>
</dbReference>
<dbReference type="SUPFAM" id="SSF56059">
    <property type="entry name" value="Glutathione synthetase ATP-binding domain-like"/>
    <property type="match status" value="1"/>
</dbReference>
<dbReference type="SUPFAM" id="SSF52210">
    <property type="entry name" value="Succinyl-CoA synthetase domains"/>
    <property type="match status" value="1"/>
</dbReference>
<dbReference type="PROSITE" id="PS50975">
    <property type="entry name" value="ATP_GRASP"/>
    <property type="match status" value="1"/>
</dbReference>
<dbReference type="PROSITE" id="PS01217">
    <property type="entry name" value="SUCCINYL_COA_LIG_3"/>
    <property type="match status" value="1"/>
</dbReference>
<sequence>MNLHEYQGKQLFAEYGLPVSKGYAVDTPEAAAEACDKIGGTEWVVKAQVHAGGRGKAGGVKLVRSKEDAAAFAQQWLGKRLVTYQTDANGQPVTKILVESCTDIAKELYLGAVVDRSSRRIVFMASTEGGVDIEKIAHDTPEKILKATIDPLVGAQPFQGRDLAFQLGLEGKQVTQFAKIFTGLAKLFQDHDLALLEVNPLVIKADGDLHCLDAKINIDANAMYRQPKLKGFHDPSQDDPREAHAAKFELNYVALEGNIGCMVNGAGLAMGTMDIVNLHGGKPANFLDVGGGATKERVTEAFKIILSDTNVAAVLVNIFGGIVRCDMIAEGIIGAVKEVGVKIPVVVRLEGNNAELGAKVLAESGLNIIAATSLTDAAQQVVKAAEGK</sequence>
<accession>Q883Z4</accession>
<keyword id="KW-0067">ATP-binding</keyword>
<keyword id="KW-0436">Ligase</keyword>
<keyword id="KW-0460">Magnesium</keyword>
<keyword id="KW-0479">Metal-binding</keyword>
<keyword id="KW-0547">Nucleotide-binding</keyword>
<keyword id="KW-1185">Reference proteome</keyword>
<keyword id="KW-0816">Tricarboxylic acid cycle</keyword>
<feature type="chain" id="PRO_1000129214" description="Succinate--CoA ligase [ADP-forming] subunit beta">
    <location>
        <begin position="1"/>
        <end position="388"/>
    </location>
</feature>
<feature type="domain" description="ATP-grasp" evidence="1">
    <location>
        <begin position="9"/>
        <end position="244"/>
    </location>
</feature>
<feature type="binding site" evidence="1">
    <location>
        <position position="46"/>
    </location>
    <ligand>
        <name>ATP</name>
        <dbReference type="ChEBI" id="CHEBI:30616"/>
    </ligand>
</feature>
<feature type="binding site" evidence="1">
    <location>
        <begin position="53"/>
        <end position="55"/>
    </location>
    <ligand>
        <name>ATP</name>
        <dbReference type="ChEBI" id="CHEBI:30616"/>
    </ligand>
</feature>
<feature type="binding site" evidence="1">
    <location>
        <position position="99"/>
    </location>
    <ligand>
        <name>ATP</name>
        <dbReference type="ChEBI" id="CHEBI:30616"/>
    </ligand>
</feature>
<feature type="binding site" evidence="1">
    <location>
        <position position="102"/>
    </location>
    <ligand>
        <name>ATP</name>
        <dbReference type="ChEBI" id="CHEBI:30616"/>
    </ligand>
</feature>
<feature type="binding site" evidence="1">
    <location>
        <position position="107"/>
    </location>
    <ligand>
        <name>ATP</name>
        <dbReference type="ChEBI" id="CHEBI:30616"/>
    </ligand>
</feature>
<feature type="binding site" evidence="1">
    <location>
        <position position="199"/>
    </location>
    <ligand>
        <name>Mg(2+)</name>
        <dbReference type="ChEBI" id="CHEBI:18420"/>
    </ligand>
</feature>
<feature type="binding site" evidence="1">
    <location>
        <position position="213"/>
    </location>
    <ligand>
        <name>Mg(2+)</name>
        <dbReference type="ChEBI" id="CHEBI:18420"/>
    </ligand>
</feature>
<feature type="binding site" evidence="1">
    <location>
        <position position="264"/>
    </location>
    <ligand>
        <name>substrate</name>
        <note>ligand shared with subunit alpha</note>
    </ligand>
</feature>
<feature type="binding site" evidence="1">
    <location>
        <begin position="321"/>
        <end position="323"/>
    </location>
    <ligand>
        <name>substrate</name>
        <note>ligand shared with subunit alpha</note>
    </ligand>
</feature>